<proteinExistence type="evidence at transcript level"/>
<protein>
    <recommendedName>
        <fullName>Casein kinase II subunit beta</fullName>
        <shortName>CK II beta</shortName>
    </recommendedName>
</protein>
<name>CSK2B_SPOFR</name>
<keyword id="KW-0597">Phosphoprotein</keyword>
<keyword id="KW-0879">Wnt signaling pathway</keyword>
<reference key="1">
    <citation type="submission" date="1998-06" db="EMBL/GenBank/DDBJ databases">
        <title>Identification, cloning and expression of Spodoptera frugiperda casein kinase II.</title>
        <authorList>
            <person name="Ebel W."/>
            <person name="Steplewski A."/>
            <person name="Robertson N.M."/>
            <person name="Alnemri E.S."/>
            <person name="Litwack G."/>
        </authorList>
    </citation>
    <scope>NUCLEOTIDE SEQUENCE [MRNA]</scope>
</reference>
<organism>
    <name type="scientific">Spodoptera frugiperda</name>
    <name type="common">Fall armyworm</name>
    <dbReference type="NCBI Taxonomy" id="7108"/>
    <lineage>
        <taxon>Eukaryota</taxon>
        <taxon>Metazoa</taxon>
        <taxon>Ecdysozoa</taxon>
        <taxon>Arthropoda</taxon>
        <taxon>Hexapoda</taxon>
        <taxon>Insecta</taxon>
        <taxon>Pterygota</taxon>
        <taxon>Neoptera</taxon>
        <taxon>Endopterygota</taxon>
        <taxon>Lepidoptera</taxon>
        <taxon>Glossata</taxon>
        <taxon>Ditrysia</taxon>
        <taxon>Noctuoidea</taxon>
        <taxon>Noctuidae</taxon>
        <taxon>Amphipyrinae</taxon>
        <taxon>Spodoptera</taxon>
    </lineage>
</organism>
<comment type="function">
    <text evidence="1">Participates in Wnt signaling. Plays a complex role in regulating the basal catalytic activity of the alpha subunit (By similarity).</text>
</comment>
<comment type="subunit">
    <text>Tetramer of two alpha and two beta subunits.</text>
</comment>
<comment type="PTM">
    <text evidence="1">Phosphorylated by alpha subunit.</text>
</comment>
<comment type="similarity">
    <text evidence="2">Belongs to the casein kinase 2 subunit beta family.</text>
</comment>
<sequence length="221" mass="25376">MSSSEEVSWISWFCGLRGNEFFCEVDEDYINDKFNLTGLNEQVPHYRQALDMILDLEPDDDLDDNPNQSDLVEQASEILYGLIHARYILTNRGIGQMLEKFQAGDFGHCPRVYCECQPMLPLGLSDVPGEAMVKLYCPRCMDVYTPKSSRHHHTDGAYFGTGFPHMVFMVHPEYRPKRPASQFVPRLYGFKIHPLAYQIQQQAAANFKAPLRSLSYNNGKR</sequence>
<accession>O76485</accession>
<feature type="chain" id="PRO_0000068247" description="Casein kinase II subunit beta">
    <location>
        <begin position="1"/>
        <end position="221"/>
    </location>
</feature>
<feature type="modified residue" description="Phosphoserine; by autocatalysis" evidence="2">
    <location>
        <position position="2"/>
    </location>
</feature>
<dbReference type="EMBL" id="AF071211">
    <property type="protein sequence ID" value="AAC24042.1"/>
    <property type="molecule type" value="mRNA"/>
</dbReference>
<dbReference type="SMR" id="O76485"/>
<dbReference type="EnsemblMetazoa" id="XM_035574917.2">
    <property type="protein sequence ID" value="XP_035430810.1"/>
    <property type="gene ID" value="LOC118263120"/>
</dbReference>
<dbReference type="OrthoDB" id="3971593at2759"/>
<dbReference type="Proteomes" id="UP000829999">
    <property type="component" value="Unplaced"/>
</dbReference>
<dbReference type="GO" id="GO:0005737">
    <property type="term" value="C:cytoplasm"/>
    <property type="evidence" value="ECO:0007669"/>
    <property type="project" value="TreeGrafter"/>
</dbReference>
<dbReference type="GO" id="GO:0005956">
    <property type="term" value="C:protein kinase CK2 complex"/>
    <property type="evidence" value="ECO:0007669"/>
    <property type="project" value="InterPro"/>
</dbReference>
<dbReference type="GO" id="GO:0019887">
    <property type="term" value="F:protein kinase regulator activity"/>
    <property type="evidence" value="ECO:0007669"/>
    <property type="project" value="InterPro"/>
</dbReference>
<dbReference type="GO" id="GO:0016055">
    <property type="term" value="P:Wnt signaling pathway"/>
    <property type="evidence" value="ECO:0007669"/>
    <property type="project" value="UniProtKB-KW"/>
</dbReference>
<dbReference type="FunFam" id="1.10.1820.10:FF:000001">
    <property type="entry name" value="Casein kinase II subunit beta"/>
    <property type="match status" value="1"/>
</dbReference>
<dbReference type="FunFam" id="2.20.25.20:FF:000002">
    <property type="entry name" value="Casein kinase II subunit beta"/>
    <property type="match status" value="1"/>
</dbReference>
<dbReference type="Gene3D" id="2.20.25.20">
    <property type="match status" value="1"/>
</dbReference>
<dbReference type="Gene3D" id="1.10.1820.10">
    <property type="entry name" value="protein kinase ck2 holoenzyme, chain C, domain 1"/>
    <property type="match status" value="1"/>
</dbReference>
<dbReference type="InterPro" id="IPR016149">
    <property type="entry name" value="Casein_kin_II_reg-sub_N"/>
</dbReference>
<dbReference type="InterPro" id="IPR035991">
    <property type="entry name" value="Casein_kinase_II_beta-like"/>
</dbReference>
<dbReference type="InterPro" id="IPR000704">
    <property type="entry name" value="Casein_kinase_II_reg-sub"/>
</dbReference>
<dbReference type="PANTHER" id="PTHR11740">
    <property type="entry name" value="CASEIN KINASE II SUBUNIT BETA"/>
    <property type="match status" value="1"/>
</dbReference>
<dbReference type="PANTHER" id="PTHR11740:SF0">
    <property type="entry name" value="CASEIN KINASE II SUBUNIT BETA"/>
    <property type="match status" value="1"/>
</dbReference>
<dbReference type="Pfam" id="PF01214">
    <property type="entry name" value="CK_II_beta"/>
    <property type="match status" value="1"/>
</dbReference>
<dbReference type="PRINTS" id="PR00472">
    <property type="entry name" value="CASNKINASEII"/>
</dbReference>
<dbReference type="SMART" id="SM01085">
    <property type="entry name" value="CK_II_beta"/>
    <property type="match status" value="1"/>
</dbReference>
<dbReference type="SUPFAM" id="SSF57798">
    <property type="entry name" value="Casein kinase II beta subunit"/>
    <property type="match status" value="1"/>
</dbReference>
<dbReference type="PROSITE" id="PS01101">
    <property type="entry name" value="CK2_BETA"/>
    <property type="match status" value="1"/>
</dbReference>
<evidence type="ECO:0000250" key="1"/>
<evidence type="ECO:0000305" key="2"/>